<feature type="chain" id="PRO_0000103140" description="4-hydroxy-tetrahydrodipicolinate synthase">
    <location>
        <begin position="1"/>
        <end position="293"/>
    </location>
</feature>
<feature type="active site" description="Proton donor/acceptor" evidence="1">
    <location>
        <position position="133"/>
    </location>
</feature>
<feature type="active site" description="Schiff-base intermediate with substrate" evidence="1">
    <location>
        <position position="162"/>
    </location>
</feature>
<feature type="binding site" evidence="1">
    <location>
        <position position="45"/>
    </location>
    <ligand>
        <name>pyruvate</name>
        <dbReference type="ChEBI" id="CHEBI:15361"/>
    </ligand>
</feature>
<feature type="binding site" evidence="1">
    <location>
        <position position="204"/>
    </location>
    <ligand>
        <name>pyruvate</name>
        <dbReference type="ChEBI" id="CHEBI:15361"/>
    </ligand>
</feature>
<feature type="site" description="Part of a proton relay during catalysis" evidence="1">
    <location>
        <position position="44"/>
    </location>
</feature>
<feature type="site" description="Part of a proton relay during catalysis" evidence="1">
    <location>
        <position position="107"/>
    </location>
</feature>
<gene>
    <name evidence="1" type="primary">dapA</name>
    <name type="ordered locus">mlr7746</name>
</gene>
<name>DAPA_RHILO</name>
<reference key="1">
    <citation type="journal article" date="2000" name="DNA Res.">
        <title>Complete genome structure of the nitrogen-fixing symbiotic bacterium Mesorhizobium loti.</title>
        <authorList>
            <person name="Kaneko T."/>
            <person name="Nakamura Y."/>
            <person name="Sato S."/>
            <person name="Asamizu E."/>
            <person name="Kato T."/>
            <person name="Sasamoto S."/>
            <person name="Watanabe A."/>
            <person name="Idesawa K."/>
            <person name="Ishikawa A."/>
            <person name="Kawashima K."/>
            <person name="Kimura T."/>
            <person name="Kishida Y."/>
            <person name="Kiyokawa C."/>
            <person name="Kohara M."/>
            <person name="Matsumoto M."/>
            <person name="Matsuno A."/>
            <person name="Mochizuki Y."/>
            <person name="Nakayama S."/>
            <person name="Nakazaki N."/>
            <person name="Shimpo S."/>
            <person name="Sugimoto M."/>
            <person name="Takeuchi C."/>
            <person name="Yamada M."/>
            <person name="Tabata S."/>
        </authorList>
    </citation>
    <scope>NUCLEOTIDE SEQUENCE [LARGE SCALE GENOMIC DNA]</scope>
    <source>
        <strain>LMG 29417 / CECT 9101 / MAFF 303099</strain>
    </source>
</reference>
<dbReference type="EC" id="4.3.3.7" evidence="1"/>
<dbReference type="EMBL" id="BA000012">
    <property type="protein sequence ID" value="BAB54143.1"/>
    <property type="status" value="ALT_INIT"/>
    <property type="molecule type" value="Genomic_DNA"/>
</dbReference>
<dbReference type="RefSeq" id="WP_044551576.1">
    <property type="nucleotide sequence ID" value="NC_002678.2"/>
</dbReference>
<dbReference type="SMR" id="P58207"/>
<dbReference type="KEGG" id="mlo:mlr7746"/>
<dbReference type="PATRIC" id="fig|266835.9.peg.6201"/>
<dbReference type="eggNOG" id="COG0329">
    <property type="taxonomic scope" value="Bacteria"/>
</dbReference>
<dbReference type="HOGENOM" id="CLU_049343_7_1_5"/>
<dbReference type="UniPathway" id="UPA00034">
    <property type="reaction ID" value="UER00017"/>
</dbReference>
<dbReference type="Proteomes" id="UP000000552">
    <property type="component" value="Chromosome"/>
</dbReference>
<dbReference type="GO" id="GO:0005829">
    <property type="term" value="C:cytosol"/>
    <property type="evidence" value="ECO:0007669"/>
    <property type="project" value="TreeGrafter"/>
</dbReference>
<dbReference type="GO" id="GO:0008840">
    <property type="term" value="F:4-hydroxy-tetrahydrodipicolinate synthase activity"/>
    <property type="evidence" value="ECO:0007669"/>
    <property type="project" value="UniProtKB-UniRule"/>
</dbReference>
<dbReference type="GO" id="GO:0019877">
    <property type="term" value="P:diaminopimelate biosynthetic process"/>
    <property type="evidence" value="ECO:0007669"/>
    <property type="project" value="UniProtKB-UniRule"/>
</dbReference>
<dbReference type="GO" id="GO:0009089">
    <property type="term" value="P:lysine biosynthetic process via diaminopimelate"/>
    <property type="evidence" value="ECO:0007669"/>
    <property type="project" value="UniProtKB-UniRule"/>
</dbReference>
<dbReference type="CDD" id="cd00950">
    <property type="entry name" value="DHDPS"/>
    <property type="match status" value="1"/>
</dbReference>
<dbReference type="Gene3D" id="3.20.20.70">
    <property type="entry name" value="Aldolase class I"/>
    <property type="match status" value="1"/>
</dbReference>
<dbReference type="HAMAP" id="MF_00418">
    <property type="entry name" value="DapA"/>
    <property type="match status" value="1"/>
</dbReference>
<dbReference type="InterPro" id="IPR013785">
    <property type="entry name" value="Aldolase_TIM"/>
</dbReference>
<dbReference type="InterPro" id="IPR005263">
    <property type="entry name" value="DapA"/>
</dbReference>
<dbReference type="InterPro" id="IPR002220">
    <property type="entry name" value="DapA-like"/>
</dbReference>
<dbReference type="InterPro" id="IPR020625">
    <property type="entry name" value="Schiff_base-form_aldolases_AS"/>
</dbReference>
<dbReference type="InterPro" id="IPR020624">
    <property type="entry name" value="Schiff_base-form_aldolases_CS"/>
</dbReference>
<dbReference type="NCBIfam" id="TIGR00674">
    <property type="entry name" value="dapA"/>
    <property type="match status" value="1"/>
</dbReference>
<dbReference type="PANTHER" id="PTHR12128:SF66">
    <property type="entry name" value="4-HYDROXY-2-OXOGLUTARATE ALDOLASE, MITOCHONDRIAL"/>
    <property type="match status" value="1"/>
</dbReference>
<dbReference type="PANTHER" id="PTHR12128">
    <property type="entry name" value="DIHYDRODIPICOLINATE SYNTHASE"/>
    <property type="match status" value="1"/>
</dbReference>
<dbReference type="Pfam" id="PF00701">
    <property type="entry name" value="DHDPS"/>
    <property type="match status" value="1"/>
</dbReference>
<dbReference type="PIRSF" id="PIRSF001365">
    <property type="entry name" value="DHDPS"/>
    <property type="match status" value="1"/>
</dbReference>
<dbReference type="PRINTS" id="PR00146">
    <property type="entry name" value="DHPICSNTHASE"/>
</dbReference>
<dbReference type="SMART" id="SM01130">
    <property type="entry name" value="DHDPS"/>
    <property type="match status" value="1"/>
</dbReference>
<dbReference type="SUPFAM" id="SSF51569">
    <property type="entry name" value="Aldolase"/>
    <property type="match status" value="1"/>
</dbReference>
<dbReference type="PROSITE" id="PS00665">
    <property type="entry name" value="DHDPS_1"/>
    <property type="match status" value="1"/>
</dbReference>
<dbReference type="PROSITE" id="PS00666">
    <property type="entry name" value="DHDPS_2"/>
    <property type="match status" value="1"/>
</dbReference>
<sequence>MLRGSLTALVTPFEKSGRFDEKAFRAFVEWQLGEGTTGLVPVGTTGESPTLSHDEHRHVVKVCIEVANGRAPVVAGAGSNNTAEAVGLVQYAEKAGADAALVVTPYYNKPTQRGLYEHFAAVARATKLPIIIYNIPPRSVIDMMPETMGRLAHDFKNIVGVKDATGKVERVSEQRMTCGKDFIQLSGEDASALGFNAHGGVGCISVTSNVAPRLCAEFQEATLSGDSVKALELQDRLLPLHKAIFLEPGVSGAKYALSKLGKVENVLRSPLVTVEESTAAKIDAAMKHAGLIN</sequence>
<accession>P58207</accession>
<organism>
    <name type="scientific">Mesorhizobium japonicum (strain LMG 29417 / CECT 9101 / MAFF 303099)</name>
    <name type="common">Mesorhizobium loti (strain MAFF 303099)</name>
    <dbReference type="NCBI Taxonomy" id="266835"/>
    <lineage>
        <taxon>Bacteria</taxon>
        <taxon>Pseudomonadati</taxon>
        <taxon>Pseudomonadota</taxon>
        <taxon>Alphaproteobacteria</taxon>
        <taxon>Hyphomicrobiales</taxon>
        <taxon>Phyllobacteriaceae</taxon>
        <taxon>Mesorhizobium</taxon>
    </lineage>
</organism>
<protein>
    <recommendedName>
        <fullName evidence="1">4-hydroxy-tetrahydrodipicolinate synthase</fullName>
        <shortName evidence="1">HTPA synthase</shortName>
        <ecNumber evidence="1">4.3.3.7</ecNumber>
    </recommendedName>
</protein>
<evidence type="ECO:0000255" key="1">
    <source>
        <dbReference type="HAMAP-Rule" id="MF_00418"/>
    </source>
</evidence>
<evidence type="ECO:0000305" key="2"/>
<proteinExistence type="inferred from homology"/>
<comment type="function">
    <text evidence="1">Catalyzes the condensation of (S)-aspartate-beta-semialdehyde [(S)-ASA] and pyruvate to 4-hydroxy-tetrahydrodipicolinate (HTPA).</text>
</comment>
<comment type="catalytic activity">
    <reaction evidence="1">
        <text>L-aspartate 4-semialdehyde + pyruvate = (2S,4S)-4-hydroxy-2,3,4,5-tetrahydrodipicolinate + H2O + H(+)</text>
        <dbReference type="Rhea" id="RHEA:34171"/>
        <dbReference type="ChEBI" id="CHEBI:15361"/>
        <dbReference type="ChEBI" id="CHEBI:15377"/>
        <dbReference type="ChEBI" id="CHEBI:15378"/>
        <dbReference type="ChEBI" id="CHEBI:67139"/>
        <dbReference type="ChEBI" id="CHEBI:537519"/>
        <dbReference type="EC" id="4.3.3.7"/>
    </reaction>
</comment>
<comment type="pathway">
    <text evidence="1">Amino-acid biosynthesis; L-lysine biosynthesis via DAP pathway; (S)-tetrahydrodipicolinate from L-aspartate: step 3/4.</text>
</comment>
<comment type="subunit">
    <text evidence="1">Homotetramer; dimer of dimers.</text>
</comment>
<comment type="subcellular location">
    <subcellularLocation>
        <location evidence="1">Cytoplasm</location>
    </subcellularLocation>
</comment>
<comment type="similarity">
    <text evidence="1">Belongs to the DapA family.</text>
</comment>
<comment type="caution">
    <text evidence="2">Was originally thought to be a dihydrodipicolinate synthase (DHDPS), catalyzing the condensation of (S)-aspartate-beta-semialdehyde [(S)-ASA] and pyruvate to dihydrodipicolinate (DHDP). However, it was shown in E.coli that the product of the enzymatic reaction is not dihydrodipicolinate but in fact (4S)-4-hydroxy-2,3,4,5-tetrahydro-(2S)-dipicolinic acid (HTPA), and that the consecutive dehydration reaction leading to DHDP is not spontaneous but catalyzed by DapB.</text>
</comment>
<comment type="sequence caution" evidence="2">
    <conflict type="erroneous initiation">
        <sequence resource="EMBL-CDS" id="BAB54143"/>
    </conflict>
</comment>
<keyword id="KW-0028">Amino-acid biosynthesis</keyword>
<keyword id="KW-0963">Cytoplasm</keyword>
<keyword id="KW-0220">Diaminopimelate biosynthesis</keyword>
<keyword id="KW-0456">Lyase</keyword>
<keyword id="KW-0457">Lysine biosynthesis</keyword>
<keyword id="KW-0704">Schiff base</keyword>